<reference key="1">
    <citation type="submission" date="2004-10" db="EMBL/GenBank/DDBJ databases">
        <authorList>
            <consortium name="NIH - Xenopus Gene Collection (XGC) project"/>
        </authorList>
    </citation>
    <scope>NUCLEOTIDE SEQUENCE [LARGE SCALE MRNA]</scope>
</reference>
<dbReference type="EMBL" id="BC084817">
    <property type="protein sequence ID" value="AAH84817.1"/>
    <property type="molecule type" value="mRNA"/>
</dbReference>
<dbReference type="RefSeq" id="NP_001088486.1">
    <property type="nucleotide sequence ID" value="NM_001095017.2"/>
</dbReference>
<dbReference type="SMR" id="Q5U567"/>
<dbReference type="DNASU" id="495353"/>
<dbReference type="GeneID" id="495353"/>
<dbReference type="KEGG" id="xla:495353"/>
<dbReference type="AGR" id="Xenbase:XB-GENE-5901616"/>
<dbReference type="CTD" id="495353"/>
<dbReference type="Xenbase" id="XB-GENE-5901616">
    <property type="gene designation" value="pelo.L"/>
</dbReference>
<dbReference type="OrthoDB" id="10249111at2759"/>
<dbReference type="Proteomes" id="UP000186698">
    <property type="component" value="Chromosome 9_10L"/>
</dbReference>
<dbReference type="Bgee" id="495353">
    <property type="expression patterns" value="Expressed in testis and 20 other cell types or tissues"/>
</dbReference>
<dbReference type="GO" id="GO:0005737">
    <property type="term" value="C:cytoplasm"/>
    <property type="evidence" value="ECO:0000318"/>
    <property type="project" value="GO_Central"/>
</dbReference>
<dbReference type="GO" id="GO:1990533">
    <property type="term" value="C:Dom34-Hbs1 complex"/>
    <property type="evidence" value="ECO:0000250"/>
    <property type="project" value="UniProtKB"/>
</dbReference>
<dbReference type="GO" id="GO:0046872">
    <property type="term" value="F:metal ion binding"/>
    <property type="evidence" value="ECO:0007669"/>
    <property type="project" value="UniProtKB-KW"/>
</dbReference>
<dbReference type="GO" id="GO:0043022">
    <property type="term" value="F:ribosome binding"/>
    <property type="evidence" value="ECO:0000250"/>
    <property type="project" value="UniProtKB"/>
</dbReference>
<dbReference type="GO" id="GO:0051301">
    <property type="term" value="P:cell division"/>
    <property type="evidence" value="ECO:0007669"/>
    <property type="project" value="UniProtKB-KW"/>
</dbReference>
<dbReference type="GO" id="GO:0070651">
    <property type="term" value="P:nonfunctional rRNA decay"/>
    <property type="evidence" value="ECO:0000318"/>
    <property type="project" value="GO_Central"/>
</dbReference>
<dbReference type="GO" id="GO:0070966">
    <property type="term" value="P:nuclear-transcribed mRNA catabolic process, no-go decay"/>
    <property type="evidence" value="ECO:0000250"/>
    <property type="project" value="UniProtKB"/>
</dbReference>
<dbReference type="GO" id="GO:0070481">
    <property type="term" value="P:nuclear-transcribed mRNA catabolic process, non-stop decay"/>
    <property type="evidence" value="ECO:0007669"/>
    <property type="project" value="InterPro"/>
</dbReference>
<dbReference type="GO" id="GO:0072344">
    <property type="term" value="P:rescue of stalled ribosome"/>
    <property type="evidence" value="ECO:0000250"/>
    <property type="project" value="UniProtKB"/>
</dbReference>
<dbReference type="GO" id="GO:0032790">
    <property type="term" value="P:ribosome disassembly"/>
    <property type="evidence" value="ECO:0000250"/>
    <property type="project" value="UniProtKB"/>
</dbReference>
<dbReference type="GO" id="GO:0071025">
    <property type="term" value="P:RNA surveillance"/>
    <property type="evidence" value="ECO:0007669"/>
    <property type="project" value="InterPro"/>
</dbReference>
<dbReference type="FunFam" id="2.30.30.870:FF:000001">
    <property type="entry name" value="Protein pelota homolog"/>
    <property type="match status" value="1"/>
</dbReference>
<dbReference type="FunFam" id="3.30.1330.30:FF:000008">
    <property type="entry name" value="Protein pelota homolog"/>
    <property type="match status" value="1"/>
</dbReference>
<dbReference type="FunFam" id="3.30.420.60:FF:000002">
    <property type="entry name" value="Protein pelota homolog"/>
    <property type="match status" value="1"/>
</dbReference>
<dbReference type="Gene3D" id="3.30.1330.30">
    <property type="match status" value="1"/>
</dbReference>
<dbReference type="Gene3D" id="3.30.420.60">
    <property type="entry name" value="eRF1 domain 2"/>
    <property type="match status" value="1"/>
</dbReference>
<dbReference type="Gene3D" id="2.30.30.870">
    <property type="entry name" value="Pelota, domain A"/>
    <property type="match status" value="1"/>
</dbReference>
<dbReference type="InterPro" id="IPR042226">
    <property type="entry name" value="eFR1_2_sf"/>
</dbReference>
<dbReference type="InterPro" id="IPR005140">
    <property type="entry name" value="eRF1_1_Pelota"/>
</dbReference>
<dbReference type="InterPro" id="IPR005141">
    <property type="entry name" value="eRF1_2"/>
</dbReference>
<dbReference type="InterPro" id="IPR005142">
    <property type="entry name" value="eRF1_3"/>
</dbReference>
<dbReference type="InterPro" id="IPR038069">
    <property type="entry name" value="Pelota/DOM34_N"/>
</dbReference>
<dbReference type="InterPro" id="IPR029064">
    <property type="entry name" value="Ribosomal_eL30-like_sf"/>
</dbReference>
<dbReference type="InterPro" id="IPR004405">
    <property type="entry name" value="Transl-rel_pelota"/>
</dbReference>
<dbReference type="NCBIfam" id="TIGR00111">
    <property type="entry name" value="pelota"/>
    <property type="match status" value="1"/>
</dbReference>
<dbReference type="PANTHER" id="PTHR10853">
    <property type="entry name" value="PELOTA"/>
    <property type="match status" value="1"/>
</dbReference>
<dbReference type="PANTHER" id="PTHR10853:SF0">
    <property type="entry name" value="PROTEIN PELOTA HOMOLOG"/>
    <property type="match status" value="1"/>
</dbReference>
<dbReference type="Pfam" id="PF03463">
    <property type="entry name" value="eRF1_1"/>
    <property type="match status" value="1"/>
</dbReference>
<dbReference type="Pfam" id="PF03464">
    <property type="entry name" value="eRF1_2"/>
    <property type="match status" value="1"/>
</dbReference>
<dbReference type="Pfam" id="PF03465">
    <property type="entry name" value="eRF1_3"/>
    <property type="match status" value="1"/>
</dbReference>
<dbReference type="SMART" id="SM01194">
    <property type="entry name" value="eRF1_1"/>
    <property type="match status" value="1"/>
</dbReference>
<dbReference type="SUPFAM" id="SSF159065">
    <property type="entry name" value="Dom34/Pelota N-terminal domain-like"/>
    <property type="match status" value="1"/>
</dbReference>
<dbReference type="SUPFAM" id="SSF55315">
    <property type="entry name" value="L30e-like"/>
    <property type="match status" value="1"/>
</dbReference>
<dbReference type="SUPFAM" id="SSF53137">
    <property type="entry name" value="Translational machinery components"/>
    <property type="match status" value="1"/>
</dbReference>
<feature type="chain" id="PRO_0000232839" description="Protein pelota homolog">
    <location>
        <begin position="1"/>
        <end position="383"/>
    </location>
</feature>
<accession>Q5U567</accession>
<protein>
    <recommendedName>
        <fullName>Protein pelota homolog</fullName>
    </recommendedName>
</protein>
<name>PELO_XENLA</name>
<organism>
    <name type="scientific">Xenopus laevis</name>
    <name type="common">African clawed frog</name>
    <dbReference type="NCBI Taxonomy" id="8355"/>
    <lineage>
        <taxon>Eukaryota</taxon>
        <taxon>Metazoa</taxon>
        <taxon>Chordata</taxon>
        <taxon>Craniata</taxon>
        <taxon>Vertebrata</taxon>
        <taxon>Euteleostomi</taxon>
        <taxon>Amphibia</taxon>
        <taxon>Batrachia</taxon>
        <taxon>Anura</taxon>
        <taxon>Pipoidea</taxon>
        <taxon>Pipidae</taxon>
        <taxon>Xenopodinae</taxon>
        <taxon>Xenopus</taxon>
        <taxon>Xenopus</taxon>
    </lineage>
</organism>
<evidence type="ECO:0000250" key="1">
    <source>
        <dbReference type="UniProtKB" id="P33309"/>
    </source>
</evidence>
<evidence type="ECO:0000250" key="2">
    <source>
        <dbReference type="UniProtKB" id="Q9BRX2"/>
    </source>
</evidence>
<evidence type="ECO:0000305" key="3"/>
<proteinExistence type="evidence at transcript level"/>
<sequence>MKLIRKDIEKDNAGQVTLIPEEAEDMWHTYNLLHVGDSLQASTIRKVQTESSTGSVGSNRVRTTLTICVETIDFDSQACQLRVKGINIQENQYVKMGAYHTIELEPNRKFTLAKKQWDSIVLERIEQACDPAFSADVAAVVMQEGLAHICLVTPSMTLLRAKIETSIPRKRRGNCTQHEKALEKFYEQVMQGILRHINFDVVKVVLVASPGFVREQFCEFLFLRAVKQDLKILLENRGKFLQVHSSSGRKYSLTEVLCDPAVTARLSDTKAACEIKALGDFYKMLQHEPDRAFYGIKQVEKANEALAVDTLLVTDELFRHQDVPTRTRYVRLVDSVKDNGGTVRIFSSLHVSGEQLNQLTGVAAILRFPVADLSDEESSSDED</sequence>
<gene>
    <name type="primary">pelo</name>
</gene>
<keyword id="KW-0131">Cell cycle</keyword>
<keyword id="KW-0132">Cell division</keyword>
<keyword id="KW-0963">Cytoplasm</keyword>
<keyword id="KW-0479">Metal-binding</keyword>
<keyword id="KW-1185">Reference proteome</keyword>
<comment type="function">
    <text evidence="2">Component of the Pelota-HBS1L complex, a complex that recognizes stalled ribosomes and triggers the No-Go Decay (NGD) pathway. In the Pelota-HBS1L complex, PELO recognizes ribosomes stalled at the 3' end of an mRNA and engages stalled ribosomes by destabilizing mRNA in the mRNA channel. Following mRNA extraction from stalled ribosomes by the SKI complex, the Pelota-HBS1L complex promotes recruitment of ABCE1, which drives the disassembly of stalled ribosomes, followed by degradation of damaged mRNAs as part of the NGD pathway.</text>
</comment>
<comment type="cofactor">
    <cofactor evidence="1">
        <name>a divalent metal cation</name>
        <dbReference type="ChEBI" id="CHEBI:60240"/>
    </cofactor>
</comment>
<comment type="subunit">
    <text evidence="2">Component of the Pelota-HBS1L complex, also named Dom34-Hbs1 complex, composed of PELO and HBS1L.</text>
</comment>
<comment type="subcellular location">
    <subcellularLocation>
        <location evidence="2">Cytoplasm</location>
    </subcellularLocation>
</comment>
<comment type="similarity">
    <text evidence="3">Belongs to the eukaryotic release factor 1 family. Pelota subfamily.</text>
</comment>